<dbReference type="EMBL" id="AY057879">
    <property type="protein sequence ID" value="AAL30061.1"/>
    <property type="molecule type" value="mRNA"/>
</dbReference>
<dbReference type="BMRB" id="Q8AY49"/>
<dbReference type="SMR" id="Q8AY49"/>
<dbReference type="GO" id="GO:0005576">
    <property type="term" value="C:extracellular region"/>
    <property type="evidence" value="ECO:0007669"/>
    <property type="project" value="UniProtKB-SubCell"/>
</dbReference>
<dbReference type="GO" id="GO:0030550">
    <property type="term" value="F:acetylcholine receptor inhibitor activity"/>
    <property type="evidence" value="ECO:0007669"/>
    <property type="project" value="UniProtKB-KW"/>
</dbReference>
<dbReference type="GO" id="GO:0099106">
    <property type="term" value="F:ion channel regulator activity"/>
    <property type="evidence" value="ECO:0007669"/>
    <property type="project" value="UniProtKB-KW"/>
</dbReference>
<dbReference type="GO" id="GO:0090729">
    <property type="term" value="F:toxin activity"/>
    <property type="evidence" value="ECO:0007669"/>
    <property type="project" value="UniProtKB-KW"/>
</dbReference>
<dbReference type="CDD" id="cd00206">
    <property type="entry name" value="TFP_snake_toxin"/>
    <property type="match status" value="1"/>
</dbReference>
<dbReference type="Gene3D" id="2.10.60.10">
    <property type="entry name" value="CD59"/>
    <property type="match status" value="1"/>
</dbReference>
<dbReference type="InterPro" id="IPR003571">
    <property type="entry name" value="Snake_3FTx"/>
</dbReference>
<dbReference type="InterPro" id="IPR045860">
    <property type="entry name" value="Snake_toxin-like_sf"/>
</dbReference>
<dbReference type="InterPro" id="IPR018354">
    <property type="entry name" value="Snake_toxin_con_site"/>
</dbReference>
<dbReference type="InterPro" id="IPR054131">
    <property type="entry name" value="Toxin_cobra-type"/>
</dbReference>
<dbReference type="Pfam" id="PF21947">
    <property type="entry name" value="Toxin_cobra-type"/>
    <property type="match status" value="1"/>
</dbReference>
<dbReference type="SUPFAM" id="SSF57302">
    <property type="entry name" value="Snake toxin-like"/>
    <property type="match status" value="1"/>
</dbReference>
<dbReference type="PROSITE" id="PS00272">
    <property type="entry name" value="SNAKE_TOXIN"/>
    <property type="match status" value="1"/>
</dbReference>
<sequence length="86" mass="9758">MKTLLLTLVVVTIVCLDLGYTLTCLICPEKDCQKVHTCRNEEKICVKRFYDKNQLGWRAQRGCAVSCPKAKPNETVQCCSTDDCNR</sequence>
<name>3NO23_BUNCA</name>
<keyword id="KW-0008">Acetylcholine receptor inhibiting toxin</keyword>
<keyword id="KW-1015">Disulfide bond</keyword>
<keyword id="KW-0872">Ion channel impairing toxin</keyword>
<keyword id="KW-0528">Neurotoxin</keyword>
<keyword id="KW-0629">Postsynaptic neurotoxin</keyword>
<keyword id="KW-0964">Secreted</keyword>
<keyword id="KW-0732">Signal</keyword>
<keyword id="KW-0800">Toxin</keyword>
<proteinExistence type="inferred from homology"/>
<comment type="function">
    <text evidence="2">Binds with low affinity to muscular (alpha-1-beta-1-delta-epsilon/CHRNA1-CHRNB1-CHRND-CHRNE) and very low affinity to neuronal (alpha-7/CHRNA7) nicotinic acetylcholine receptor (nAChR).</text>
</comment>
<comment type="subcellular location">
    <subcellularLocation>
        <location evidence="1">Secreted</location>
    </subcellularLocation>
</comment>
<comment type="tissue specificity">
    <text evidence="5">Expressed by the venom gland.</text>
</comment>
<comment type="similarity">
    <text evidence="5">Belongs to the three-finger toxin family. Ancestral subfamily. Orphan group II sub-subfamily.</text>
</comment>
<accession>Q8AY49</accession>
<evidence type="ECO:0000250" key="1"/>
<evidence type="ECO:0000250" key="2">
    <source>
        <dbReference type="UniProtKB" id="O42255"/>
    </source>
</evidence>
<evidence type="ECO:0000250" key="3">
    <source>
        <dbReference type="UniProtKB" id="Q8AY51"/>
    </source>
</evidence>
<evidence type="ECO:0000255" key="4"/>
<evidence type="ECO:0000305" key="5"/>
<reference key="1">
    <citation type="submission" date="2001-10" db="EMBL/GenBank/DDBJ databases">
        <title>Structural and functional genomics of Bungarus candidus.</title>
        <authorList>
            <person name="Tsai I.H."/>
            <person name="Wang Y.M."/>
            <person name="Hsu H.Y."/>
        </authorList>
    </citation>
    <scope>NUCLEOTIDE SEQUENCE [MRNA]</scope>
    <source>
        <tissue>Venom gland</tissue>
    </source>
</reference>
<organism>
    <name type="scientific">Bungarus candidus</name>
    <name type="common">Malayan krait</name>
    <dbReference type="NCBI Taxonomy" id="92438"/>
    <lineage>
        <taxon>Eukaryota</taxon>
        <taxon>Metazoa</taxon>
        <taxon>Chordata</taxon>
        <taxon>Craniata</taxon>
        <taxon>Vertebrata</taxon>
        <taxon>Euteleostomi</taxon>
        <taxon>Lepidosauria</taxon>
        <taxon>Squamata</taxon>
        <taxon>Bifurcata</taxon>
        <taxon>Unidentata</taxon>
        <taxon>Episquamata</taxon>
        <taxon>Toxicofera</taxon>
        <taxon>Serpentes</taxon>
        <taxon>Colubroidea</taxon>
        <taxon>Elapidae</taxon>
        <taxon>Bungarinae</taxon>
        <taxon>Bungarus</taxon>
    </lineage>
</organism>
<protein>
    <recommendedName>
        <fullName>Weak toxin 3</fullName>
    </recommendedName>
</protein>
<feature type="signal peptide" evidence="4">
    <location>
        <begin position="1"/>
        <end position="23"/>
    </location>
</feature>
<feature type="chain" id="PRO_0000316186" description="Weak toxin 3">
    <location>
        <begin position="24"/>
        <end position="86"/>
    </location>
</feature>
<feature type="disulfide bond" evidence="3">
    <location>
        <begin position="24"/>
        <end position="45"/>
    </location>
</feature>
<feature type="disulfide bond" evidence="3">
    <location>
        <begin position="27"/>
        <end position="32"/>
    </location>
</feature>
<feature type="disulfide bond" evidence="3">
    <location>
        <begin position="38"/>
        <end position="63"/>
    </location>
</feature>
<feature type="disulfide bond" evidence="3">
    <location>
        <begin position="67"/>
        <end position="78"/>
    </location>
</feature>
<feature type="disulfide bond" evidence="3">
    <location>
        <begin position="79"/>
        <end position="84"/>
    </location>
</feature>